<comment type="function">
    <text evidence="3">Hydrolyzes the N-glycolyl group from N-glycolylglucosamine 6-phosphate (GlcNGc-6-P) in the N-glycolylneuraminic acid (Neu5Gc) degradation pathway. Although human is not able to catalyze formation of Neu5Gc due to the inactive CMAHP enzyme, Neu5Gc is present in food and must be degraded.</text>
</comment>
<comment type="catalytic activity">
    <reaction evidence="3">
        <text>N-acetyl-D-glucosamine 6-phosphate + H2O = D-glucosamine 6-phosphate + acetate</text>
        <dbReference type="Rhea" id="RHEA:22936"/>
        <dbReference type="ChEBI" id="CHEBI:15377"/>
        <dbReference type="ChEBI" id="CHEBI:30089"/>
        <dbReference type="ChEBI" id="CHEBI:57513"/>
        <dbReference type="ChEBI" id="CHEBI:58725"/>
        <dbReference type="EC" id="3.5.1.25"/>
    </reaction>
</comment>
<comment type="cofactor">
    <cofactor evidence="1">
        <name>a divalent metal cation</name>
        <dbReference type="ChEBI" id="CHEBI:60240"/>
    </cofactor>
    <text evidence="1">Binds 1 divalent metal cation per subunit.</text>
</comment>
<comment type="pathway">
    <text evidence="3">Amino-sugar metabolism; N-acetylneuraminate degradation.</text>
</comment>
<comment type="interaction">
    <interactant intactId="EBI-2798672">
        <id>Q9Y303</id>
    </interactant>
    <interactant intactId="EBI-10275006">
        <id>Q8TDQ7</id>
        <label>GNPDA2</label>
    </interactant>
    <organismsDiffer>false</organismsDiffer>
    <experiments>6</experiments>
</comment>
<comment type="interaction">
    <interactant intactId="EBI-2798672">
        <id>Q9Y303</id>
    </interactant>
    <interactant intactId="EBI-358993">
        <id>Q15645</id>
        <label>TRIP13</label>
    </interactant>
    <organismsDiffer>false</organismsDiffer>
    <experiments>3</experiments>
</comment>
<comment type="interaction">
    <interactant intactId="EBI-12323557">
        <id>Q9Y303-2</id>
    </interactant>
    <interactant intactId="EBI-718729">
        <id>P55212</id>
        <label>CASP6</label>
    </interactant>
    <organismsDiffer>false</organismsDiffer>
    <experiments>3</experiments>
</comment>
<comment type="interaction">
    <interactant intactId="EBI-12323557">
        <id>Q9Y303-2</id>
    </interactant>
    <interactant intactId="EBI-12197555">
        <id>Q8TDQ7-2</id>
        <label>GNPDA2</label>
    </interactant>
    <organismsDiffer>false</organismsDiffer>
    <experiments>3</experiments>
</comment>
<comment type="interaction">
    <interactant intactId="EBI-12323557">
        <id>Q9Y303-2</id>
    </interactant>
    <interactant intactId="EBI-473886">
        <id>O00291</id>
        <label>HIP1</label>
    </interactant>
    <organismsDiffer>false</organismsDiffer>
    <experiments>3</experiments>
</comment>
<comment type="interaction">
    <interactant intactId="EBI-12323557">
        <id>Q9Y303-2</id>
    </interactant>
    <interactant intactId="EBI-21591415">
        <id>P13473-2</id>
        <label>LAMP2</label>
    </interactant>
    <organismsDiffer>false</organismsDiffer>
    <experiments>3</experiments>
</comment>
<comment type="interaction">
    <interactant intactId="EBI-12323557">
        <id>Q9Y303-2</id>
    </interactant>
    <interactant intactId="EBI-286642">
        <id>P62826</id>
        <label>RAN</label>
    </interactant>
    <organismsDiffer>false</organismsDiffer>
    <experiments>3</experiments>
</comment>
<comment type="interaction">
    <interactant intactId="EBI-12323557">
        <id>Q9Y303-2</id>
    </interactant>
    <interactant intactId="EBI-358993">
        <id>Q15645</id>
        <label>TRIP13</label>
    </interactant>
    <organismsDiffer>false</organismsDiffer>
    <experiments>3</experiments>
</comment>
<comment type="alternative products">
    <event type="alternative splicing"/>
    <isoform>
        <id>Q9Y303-1</id>
        <name>1</name>
        <sequence type="displayed"/>
    </isoform>
    <isoform>
        <id>Q9Y303-2</id>
        <name>2</name>
        <sequence type="described" ref="VSP_030698"/>
    </isoform>
    <isoform>
        <id>Q9Y303-3</id>
        <name>3</name>
        <sequence type="described" ref="VSP_030698 VSP_038782"/>
    </isoform>
</comment>
<comment type="similarity">
    <text evidence="6">Belongs to the metallo-dependent hydrolases superfamily. NagA family.</text>
</comment>
<comment type="sequence caution" evidence="6">
    <conflict type="frameshift">
        <sequence resource="EMBL-CDS" id="AAD27723"/>
    </conflict>
</comment>
<sequence length="409" mass="43748">MRGEQGAAGARVLQFTNCRILRGGKLLREDLWVRGGRILDPEKLFFEERRVADERRDCGGRILAPGFIDVQINGGFGVDFSQATEDVGSGVALVARRILSHGVTSFCPTLVTSPPEVYHKVVPQIPVKSGGPHGAGVLGLHLEGPFISREKRGAHPEAHLRSFEADAFQDLLATYGPLDNVRIVTLAPELGRSHEVIRALTARGICVSLGHSVADLRAAEDAVWSGATFITHLFNAMLPFHHRDPGIVGLLTSDRLPAGRCIFYGMIADGTHTNPAALRIAHRAHPQGLVLVTDAIPALGLGNGRHTLGQQEVEVDGLTAYVAGTKTLSGSIAPMDVCVRHFLQATGCSMESALEAASLHPAQLLGLEKSKGTLDFGADADFVVLDDSLHVQATYISGELVWQADAARQ</sequence>
<feature type="chain" id="PRO_0000315776" description="N-acetylglucosamine-6-phosphate deacetylase">
    <location>
        <begin position="1"/>
        <end position="409"/>
    </location>
</feature>
<feature type="active site" description="Proton donor/acceptor" evidence="1">
    <location>
        <position position="294"/>
    </location>
</feature>
<feature type="binding site" evidence="1">
    <location>
        <position position="143"/>
    </location>
    <ligand>
        <name>a divalent metal cation</name>
        <dbReference type="ChEBI" id="CHEBI:60240"/>
    </ligand>
</feature>
<feature type="binding site" evidence="1">
    <location>
        <begin position="154"/>
        <end position="155"/>
    </location>
    <ligand>
        <name>substrate</name>
    </ligand>
</feature>
<feature type="binding site" evidence="1">
    <location>
        <position position="211"/>
    </location>
    <ligand>
        <name>a divalent metal cation</name>
        <dbReference type="ChEBI" id="CHEBI:60240"/>
    </ligand>
</feature>
<feature type="binding site" evidence="1">
    <location>
        <position position="232"/>
    </location>
    <ligand>
        <name>a divalent metal cation</name>
        <dbReference type="ChEBI" id="CHEBI:60240"/>
    </ligand>
</feature>
<feature type="binding site" evidence="1">
    <location>
        <begin position="235"/>
        <end position="236"/>
    </location>
    <ligand>
        <name>substrate</name>
    </ligand>
</feature>
<feature type="binding site" evidence="1">
    <location>
        <position position="243"/>
    </location>
    <ligand>
        <name>substrate</name>
    </ligand>
</feature>
<feature type="binding site" evidence="1">
    <location>
        <begin position="269"/>
        <end position="272"/>
    </location>
    <ligand>
        <name>substrate</name>
    </ligand>
</feature>
<feature type="binding site" evidence="1">
    <location>
        <begin position="328"/>
        <end position="330"/>
    </location>
    <ligand>
        <name>substrate</name>
    </ligand>
</feature>
<feature type="splice variant" id="VSP_030698" description="In isoform 2 and isoform 3." evidence="4 5">
    <original>A</original>
    <variation>AGERPDPLGPRSQPACQVAHDPPRACPLCSQ</variation>
    <location>
        <position position="323"/>
    </location>
</feature>
<feature type="splice variant" id="VSP_038782" description="In isoform 3." evidence="4">
    <original>ELVWQADAARQ</original>
    <variation>PVLAGCGDPAWCWRAVWEAPVCPAHPISVILPSSVSPWPWHTPMWQTRAVRLPEQLRGGWASGALLALRTATVGSDVRDWCSPTSGVIVLTFSPFEFWGGWLPSPLLTGAVLGTGGTRLALPLFSSLCCKAQLRKCLQVQRDRMVWAPPVGREQPGKNHLPGQGLA</variation>
    <location>
        <begin position="399"/>
        <end position="409"/>
    </location>
</feature>
<feature type="sequence variant" id="VAR_038301" description="In a colorectal cancer sample; somatic mutation; dbSNP:rs1220386463." evidence="2">
    <original>D</original>
    <variation>N</variation>
    <location>
        <position position="294"/>
    </location>
</feature>
<feature type="sequence conflict" description="In Ref. 1; AAD27723." evidence="6" ref="1">
    <original>R</original>
    <variation>E</variation>
    <location>
        <position position="97"/>
    </location>
</feature>
<feature type="sequence conflict" description="In Ref. 1; AAD27723." evidence="6" ref="1">
    <original>A</original>
    <variation>Q</variation>
    <location>
        <position position="135"/>
    </location>
</feature>
<feature type="sequence conflict" description="In Ref. 1; AAD27723." evidence="6" ref="1">
    <original>A</original>
    <variation>T</variation>
    <location>
        <position position="154"/>
    </location>
</feature>
<feature type="sequence conflict" description="In Ref. 1; AAD27723." evidence="6" ref="1">
    <original>I</original>
    <variation>L</variation>
    <location>
        <position position="197"/>
    </location>
</feature>
<feature type="sequence conflict" description="In Ref. 1; AAD27723." evidence="6" ref="1">
    <location>
        <position position="227"/>
    </location>
</feature>
<feature type="turn" evidence="8">
    <location>
        <begin position="7"/>
        <end position="9"/>
    </location>
</feature>
<feature type="strand" evidence="9">
    <location>
        <begin position="12"/>
        <end position="17"/>
    </location>
</feature>
<feature type="strand" evidence="9">
    <location>
        <begin position="19"/>
        <end position="22"/>
    </location>
</feature>
<feature type="strand" evidence="9">
    <location>
        <begin position="25"/>
        <end position="28"/>
    </location>
</feature>
<feature type="strand" evidence="9">
    <location>
        <begin position="31"/>
        <end position="34"/>
    </location>
</feature>
<feature type="strand" evidence="9">
    <location>
        <begin position="37"/>
        <end position="39"/>
    </location>
</feature>
<feature type="helix" evidence="9">
    <location>
        <begin position="41"/>
        <end position="47"/>
    </location>
</feature>
<feature type="strand" evidence="9">
    <location>
        <begin position="53"/>
        <end position="57"/>
    </location>
</feature>
<feature type="strand" evidence="9">
    <location>
        <begin position="62"/>
        <end position="65"/>
    </location>
</feature>
<feature type="strand" evidence="9">
    <location>
        <begin position="67"/>
        <end position="72"/>
    </location>
</feature>
<feature type="helix" evidence="9">
    <location>
        <begin position="87"/>
        <end position="97"/>
    </location>
</feature>
<feature type="helix" evidence="9">
    <location>
        <begin position="98"/>
        <end position="101"/>
    </location>
</feature>
<feature type="strand" evidence="9">
    <location>
        <begin position="103"/>
        <end position="110"/>
    </location>
</feature>
<feature type="helix" evidence="9">
    <location>
        <begin position="115"/>
        <end position="121"/>
    </location>
</feature>
<feature type="helix" evidence="9">
    <location>
        <begin position="122"/>
        <end position="124"/>
    </location>
</feature>
<feature type="strand" evidence="9">
    <location>
        <begin position="134"/>
        <end position="137"/>
    </location>
</feature>
<feature type="strand" evidence="9">
    <location>
        <begin position="140"/>
        <end position="143"/>
    </location>
</feature>
<feature type="strand" evidence="9">
    <location>
        <begin position="145"/>
        <end position="147"/>
    </location>
</feature>
<feature type="helix" evidence="9">
    <location>
        <begin position="157"/>
        <end position="159"/>
    </location>
</feature>
<feature type="turn" evidence="9">
    <location>
        <begin position="164"/>
        <end position="167"/>
    </location>
</feature>
<feature type="helix" evidence="9">
    <location>
        <begin position="168"/>
        <end position="175"/>
    </location>
</feature>
<feature type="strand" evidence="9">
    <location>
        <begin position="181"/>
        <end position="186"/>
    </location>
</feature>
<feature type="helix" evidence="9">
    <location>
        <begin position="193"/>
        <end position="202"/>
    </location>
</feature>
<feature type="strand" evidence="9">
    <location>
        <begin position="206"/>
        <end position="209"/>
    </location>
</feature>
<feature type="helix" evidence="9">
    <location>
        <begin position="216"/>
        <end position="225"/>
    </location>
</feature>
<feature type="strand" evidence="9">
    <location>
        <begin position="229"/>
        <end position="232"/>
    </location>
</feature>
<feature type="turn" evidence="9">
    <location>
        <begin position="233"/>
        <end position="236"/>
    </location>
</feature>
<feature type="helix" evidence="9">
    <location>
        <begin position="246"/>
        <end position="251"/>
    </location>
</feature>
<feature type="strand" evidence="9">
    <location>
        <begin position="254"/>
        <end position="256"/>
    </location>
</feature>
<feature type="strand" evidence="9">
    <location>
        <begin position="263"/>
        <end position="266"/>
    </location>
</feature>
<feature type="strand" evidence="9">
    <location>
        <begin position="269"/>
        <end position="273"/>
    </location>
</feature>
<feature type="helix" evidence="9">
    <location>
        <begin position="275"/>
        <end position="284"/>
    </location>
</feature>
<feature type="helix" evidence="9">
    <location>
        <begin position="286"/>
        <end position="288"/>
    </location>
</feature>
<feature type="strand" evidence="9">
    <location>
        <begin position="289"/>
        <end position="291"/>
    </location>
</feature>
<feature type="turn" evidence="9">
    <location>
        <begin position="297"/>
        <end position="301"/>
    </location>
</feature>
<feature type="strand" evidence="9">
    <location>
        <begin position="303"/>
        <end position="308"/>
    </location>
</feature>
<feature type="strand" evidence="9">
    <location>
        <begin position="311"/>
        <end position="316"/>
    </location>
</feature>
<feature type="strand" evidence="9">
    <location>
        <begin position="319"/>
        <end position="322"/>
    </location>
</feature>
<feature type="strand" evidence="8">
    <location>
        <begin position="328"/>
        <end position="331"/>
    </location>
</feature>
<feature type="helix" evidence="9">
    <location>
        <begin position="335"/>
        <end position="346"/>
    </location>
</feature>
<feature type="helix" evidence="9">
    <location>
        <begin position="350"/>
        <end position="356"/>
    </location>
</feature>
<feature type="helix" evidence="9">
    <location>
        <begin position="359"/>
        <end position="364"/>
    </location>
</feature>
<feature type="turn" evidence="9">
    <location>
        <begin position="368"/>
        <end position="370"/>
    </location>
</feature>
<feature type="strand" evidence="9">
    <location>
        <begin position="382"/>
        <end position="385"/>
    </location>
</feature>
<feature type="strand" evidence="9">
    <location>
        <begin position="391"/>
        <end position="396"/>
    </location>
</feature>
<feature type="strand" evidence="9">
    <location>
        <begin position="399"/>
        <end position="403"/>
    </location>
</feature>
<name>NAGA_HUMAN</name>
<organism>
    <name type="scientific">Homo sapiens</name>
    <name type="common">Human</name>
    <dbReference type="NCBI Taxonomy" id="9606"/>
    <lineage>
        <taxon>Eukaryota</taxon>
        <taxon>Metazoa</taxon>
        <taxon>Chordata</taxon>
        <taxon>Craniata</taxon>
        <taxon>Vertebrata</taxon>
        <taxon>Euteleostomi</taxon>
        <taxon>Mammalia</taxon>
        <taxon>Eutheria</taxon>
        <taxon>Euarchontoglires</taxon>
        <taxon>Primates</taxon>
        <taxon>Haplorrhini</taxon>
        <taxon>Catarrhini</taxon>
        <taxon>Hominidae</taxon>
        <taxon>Homo</taxon>
    </lineage>
</organism>
<proteinExistence type="evidence at protein level"/>
<reference key="1">
    <citation type="journal article" date="2000" name="Genome Res.">
        <title>Identification of novel human genes evolutionarily conserved in Caenorhabditis elegans by comparative proteomics.</title>
        <authorList>
            <person name="Lai C.-H."/>
            <person name="Chou C.-Y."/>
            <person name="Ch'ang L.-Y."/>
            <person name="Liu C.-S."/>
            <person name="Lin W.-C."/>
        </authorList>
    </citation>
    <scope>NUCLEOTIDE SEQUENCE [LARGE SCALE MRNA] (ISOFORM 1)</scope>
</reference>
<reference key="2">
    <citation type="journal article" date="2004" name="Nat. Genet.">
        <title>Complete sequencing and characterization of 21,243 full-length human cDNAs.</title>
        <authorList>
            <person name="Ota T."/>
            <person name="Suzuki Y."/>
            <person name="Nishikawa T."/>
            <person name="Otsuki T."/>
            <person name="Sugiyama T."/>
            <person name="Irie R."/>
            <person name="Wakamatsu A."/>
            <person name="Hayashi K."/>
            <person name="Sato H."/>
            <person name="Nagai K."/>
            <person name="Kimura K."/>
            <person name="Makita H."/>
            <person name="Sekine M."/>
            <person name="Obayashi M."/>
            <person name="Nishi T."/>
            <person name="Shibahara T."/>
            <person name="Tanaka T."/>
            <person name="Ishii S."/>
            <person name="Yamamoto J."/>
            <person name="Saito K."/>
            <person name="Kawai Y."/>
            <person name="Isono Y."/>
            <person name="Nakamura Y."/>
            <person name="Nagahari K."/>
            <person name="Murakami K."/>
            <person name="Yasuda T."/>
            <person name="Iwayanagi T."/>
            <person name="Wagatsuma M."/>
            <person name="Shiratori A."/>
            <person name="Sudo H."/>
            <person name="Hosoiri T."/>
            <person name="Kaku Y."/>
            <person name="Kodaira H."/>
            <person name="Kondo H."/>
            <person name="Sugawara M."/>
            <person name="Takahashi M."/>
            <person name="Kanda K."/>
            <person name="Yokoi T."/>
            <person name="Furuya T."/>
            <person name="Kikkawa E."/>
            <person name="Omura Y."/>
            <person name="Abe K."/>
            <person name="Kamihara K."/>
            <person name="Katsuta N."/>
            <person name="Sato K."/>
            <person name="Tanikawa M."/>
            <person name="Yamazaki M."/>
            <person name="Ninomiya K."/>
            <person name="Ishibashi T."/>
            <person name="Yamashita H."/>
            <person name="Murakawa K."/>
            <person name="Fujimori K."/>
            <person name="Tanai H."/>
            <person name="Kimata M."/>
            <person name="Watanabe M."/>
            <person name="Hiraoka S."/>
            <person name="Chiba Y."/>
            <person name="Ishida S."/>
            <person name="Ono Y."/>
            <person name="Takiguchi S."/>
            <person name="Watanabe S."/>
            <person name="Yosida M."/>
            <person name="Hotuta T."/>
            <person name="Kusano J."/>
            <person name="Kanehori K."/>
            <person name="Takahashi-Fujii A."/>
            <person name="Hara H."/>
            <person name="Tanase T.-O."/>
            <person name="Nomura Y."/>
            <person name="Togiya S."/>
            <person name="Komai F."/>
            <person name="Hara R."/>
            <person name="Takeuchi K."/>
            <person name="Arita M."/>
            <person name="Imose N."/>
            <person name="Musashino K."/>
            <person name="Yuuki H."/>
            <person name="Oshima A."/>
            <person name="Sasaki N."/>
            <person name="Aotsuka S."/>
            <person name="Yoshikawa Y."/>
            <person name="Matsunawa H."/>
            <person name="Ichihara T."/>
            <person name="Shiohata N."/>
            <person name="Sano S."/>
            <person name="Moriya S."/>
            <person name="Momiyama H."/>
            <person name="Satoh N."/>
            <person name="Takami S."/>
            <person name="Terashima Y."/>
            <person name="Suzuki O."/>
            <person name="Nakagawa S."/>
            <person name="Senoh A."/>
            <person name="Mizoguchi H."/>
            <person name="Goto Y."/>
            <person name="Shimizu F."/>
            <person name="Wakebe H."/>
            <person name="Hishigaki H."/>
            <person name="Watanabe T."/>
            <person name="Sugiyama A."/>
            <person name="Takemoto M."/>
            <person name="Kawakami B."/>
            <person name="Yamazaki M."/>
            <person name="Watanabe K."/>
            <person name="Kumagai A."/>
            <person name="Itakura S."/>
            <person name="Fukuzumi Y."/>
            <person name="Fujimori Y."/>
            <person name="Komiyama M."/>
            <person name="Tashiro H."/>
            <person name="Tanigami A."/>
            <person name="Fujiwara T."/>
            <person name="Ono T."/>
            <person name="Yamada K."/>
            <person name="Fujii Y."/>
            <person name="Ozaki K."/>
            <person name="Hirao M."/>
            <person name="Ohmori Y."/>
            <person name="Kawabata A."/>
            <person name="Hikiji T."/>
            <person name="Kobatake N."/>
            <person name="Inagaki H."/>
            <person name="Ikema Y."/>
            <person name="Okamoto S."/>
            <person name="Okitani R."/>
            <person name="Kawakami T."/>
            <person name="Noguchi S."/>
            <person name="Itoh T."/>
            <person name="Shigeta K."/>
            <person name="Senba T."/>
            <person name="Matsumura K."/>
            <person name="Nakajima Y."/>
            <person name="Mizuno T."/>
            <person name="Morinaga M."/>
            <person name="Sasaki M."/>
            <person name="Togashi T."/>
            <person name="Oyama M."/>
            <person name="Hata H."/>
            <person name="Watanabe M."/>
            <person name="Komatsu T."/>
            <person name="Mizushima-Sugano J."/>
            <person name="Satoh T."/>
            <person name="Shirai Y."/>
            <person name="Takahashi Y."/>
            <person name="Nakagawa K."/>
            <person name="Okumura K."/>
            <person name="Nagase T."/>
            <person name="Nomura N."/>
            <person name="Kikuchi H."/>
            <person name="Masuho Y."/>
            <person name="Yamashita R."/>
            <person name="Nakai K."/>
            <person name="Yada T."/>
            <person name="Nakamura Y."/>
            <person name="Ohara O."/>
            <person name="Isogai T."/>
            <person name="Sugano S."/>
        </authorList>
    </citation>
    <scope>NUCLEOTIDE SEQUENCE [LARGE SCALE MRNA] (ISOFORM 3)</scope>
    <source>
        <tissue>Tongue</tissue>
    </source>
</reference>
<reference key="3">
    <citation type="submission" date="2005-09" db="EMBL/GenBank/DDBJ databases">
        <authorList>
            <person name="Mural R.J."/>
            <person name="Istrail S."/>
            <person name="Sutton G.G."/>
            <person name="Florea L."/>
            <person name="Halpern A.L."/>
            <person name="Mobarry C.M."/>
            <person name="Lippert R."/>
            <person name="Walenz B."/>
            <person name="Shatkay H."/>
            <person name="Dew I."/>
            <person name="Miller J.R."/>
            <person name="Flanigan M.J."/>
            <person name="Edwards N.J."/>
            <person name="Bolanos R."/>
            <person name="Fasulo D."/>
            <person name="Halldorsson B.V."/>
            <person name="Hannenhalli S."/>
            <person name="Turner R."/>
            <person name="Yooseph S."/>
            <person name="Lu F."/>
            <person name="Nusskern D.R."/>
            <person name="Shue B.C."/>
            <person name="Zheng X.H."/>
            <person name="Zhong F."/>
            <person name="Delcher A.L."/>
            <person name="Huson D.H."/>
            <person name="Kravitz S.A."/>
            <person name="Mouchard L."/>
            <person name="Reinert K."/>
            <person name="Remington K.A."/>
            <person name="Clark A.G."/>
            <person name="Waterman M.S."/>
            <person name="Eichler E.E."/>
            <person name="Adams M.D."/>
            <person name="Hunkapiller M.W."/>
            <person name="Myers E.W."/>
            <person name="Venter J.C."/>
        </authorList>
    </citation>
    <scope>NUCLEOTIDE SEQUENCE [LARGE SCALE GENOMIC DNA]</scope>
</reference>
<reference key="4">
    <citation type="journal article" date="2004" name="Genome Res.">
        <title>The status, quality, and expansion of the NIH full-length cDNA project: the Mammalian Gene Collection (MGC).</title>
        <authorList>
            <consortium name="The MGC Project Team"/>
        </authorList>
    </citation>
    <scope>NUCLEOTIDE SEQUENCE [LARGE SCALE MRNA] (ISOFORM 2)</scope>
    <source>
        <tissue>Skin</tissue>
    </source>
</reference>
<reference key="5">
    <citation type="journal article" date="2011" name="BMC Syst. Biol.">
        <title>Initial characterization of the human central proteome.</title>
        <authorList>
            <person name="Burkard T.R."/>
            <person name="Planyavsky M."/>
            <person name="Kaupe I."/>
            <person name="Breitwieser F.P."/>
            <person name="Buerckstuemmer T."/>
            <person name="Bennett K.L."/>
            <person name="Superti-Furga G."/>
            <person name="Colinge J."/>
        </authorList>
    </citation>
    <scope>IDENTIFICATION BY MASS SPECTROMETRY [LARGE SCALE ANALYSIS]</scope>
</reference>
<reference key="6">
    <citation type="journal article" date="2012" name="J. Biol. Chem.">
        <title>Metabolism of vertebrate amino sugars with N-glycolyl groups: elucidating the intracellular fate of the non-human sialic acid N-glycolylneuraminic acid.</title>
        <authorList>
            <person name="Bergfeld A.K."/>
            <person name="Pearce O.M."/>
            <person name="Diaz S.L."/>
            <person name="Pham T."/>
            <person name="Varki A."/>
        </authorList>
    </citation>
    <scope>FUNCTION</scope>
    <scope>CATALYTIC ACTIVITY</scope>
    <scope>PATHWAY</scope>
</reference>
<reference key="7">
    <citation type="journal article" date="2006" name="Science">
        <title>The consensus coding sequences of human breast and colorectal cancers.</title>
        <authorList>
            <person name="Sjoeblom T."/>
            <person name="Jones S."/>
            <person name="Wood L.D."/>
            <person name="Parsons D.W."/>
            <person name="Lin J."/>
            <person name="Barber T.D."/>
            <person name="Mandelker D."/>
            <person name="Leary R.J."/>
            <person name="Ptak J."/>
            <person name="Silliman N."/>
            <person name="Szabo S."/>
            <person name="Buckhaults P."/>
            <person name="Farrell C."/>
            <person name="Meeh P."/>
            <person name="Markowitz S.D."/>
            <person name="Willis J."/>
            <person name="Dawson D."/>
            <person name="Willson J.K.V."/>
            <person name="Gazdar A.F."/>
            <person name="Hartigan J."/>
            <person name="Wu L."/>
            <person name="Liu C."/>
            <person name="Parmigiani G."/>
            <person name="Park B.H."/>
            <person name="Bachman K.E."/>
            <person name="Papadopoulos N."/>
            <person name="Vogelstein B."/>
            <person name="Kinzler K.W."/>
            <person name="Velculescu V.E."/>
        </authorList>
    </citation>
    <scope>VARIANT [LARGE SCALE ANALYSIS] ASN-294</scope>
</reference>
<keyword id="KW-0002">3D-structure</keyword>
<keyword id="KW-0025">Alternative splicing</keyword>
<keyword id="KW-0119">Carbohydrate metabolism</keyword>
<keyword id="KW-0378">Hydrolase</keyword>
<keyword id="KW-0479">Metal-binding</keyword>
<keyword id="KW-1267">Proteomics identification</keyword>
<keyword id="KW-1185">Reference proteome</keyword>
<gene>
    <name type="primary">AMDHD2</name>
    <name type="ORF">CGI-14</name>
</gene>
<accession>Q9Y303</accession>
<accession>B4DL77</accession>
<accession>Q8WV54</accession>
<evidence type="ECO:0000250" key="1">
    <source>
        <dbReference type="UniProtKB" id="P0AF18"/>
    </source>
</evidence>
<evidence type="ECO:0000269" key="2">
    <source>
    </source>
</evidence>
<evidence type="ECO:0000269" key="3">
    <source>
    </source>
</evidence>
<evidence type="ECO:0000303" key="4">
    <source>
    </source>
</evidence>
<evidence type="ECO:0000303" key="5">
    <source>
    </source>
</evidence>
<evidence type="ECO:0000305" key="6"/>
<evidence type="ECO:0000305" key="7">
    <source>
    </source>
</evidence>
<evidence type="ECO:0007829" key="8">
    <source>
        <dbReference type="PDB" id="7NUT"/>
    </source>
</evidence>
<evidence type="ECO:0007829" key="9">
    <source>
        <dbReference type="PDB" id="7NUU"/>
    </source>
</evidence>
<protein>
    <recommendedName>
        <fullName evidence="7">N-acetylglucosamine-6-phosphate deacetylase</fullName>
        <shortName evidence="6">GlcNAc 6-P deacetylase</shortName>
        <ecNumber evidence="3">3.5.1.25</ecNumber>
    </recommendedName>
    <alternativeName>
        <fullName evidence="6">Amidohydrolase domain-containing protein 2</fullName>
    </alternativeName>
</protein>
<dbReference type="EC" id="3.5.1.25" evidence="3"/>
<dbReference type="EMBL" id="AF132948">
    <property type="protein sequence ID" value="AAD27723.1"/>
    <property type="status" value="ALT_FRAME"/>
    <property type="molecule type" value="mRNA"/>
</dbReference>
<dbReference type="EMBL" id="AK296877">
    <property type="protein sequence ID" value="BAG59439.1"/>
    <property type="molecule type" value="mRNA"/>
</dbReference>
<dbReference type="EMBL" id="CH471112">
    <property type="protein sequence ID" value="EAW85500.1"/>
    <property type="molecule type" value="Genomic_DNA"/>
</dbReference>
<dbReference type="EMBL" id="BC018734">
    <property type="protein sequence ID" value="AAH18734.1"/>
    <property type="molecule type" value="mRNA"/>
</dbReference>
<dbReference type="CCDS" id="CCDS10471.1">
    <molecule id="Q9Y303-2"/>
</dbReference>
<dbReference type="CCDS" id="CCDS53984.1">
    <molecule id="Q9Y303-3"/>
</dbReference>
<dbReference type="CCDS" id="CCDS81936.1">
    <molecule id="Q9Y303-1"/>
</dbReference>
<dbReference type="RefSeq" id="NP_001139287.1">
    <molecule id="Q9Y303-3"/>
    <property type="nucleotide sequence ID" value="NM_001145815.2"/>
</dbReference>
<dbReference type="RefSeq" id="NP_001317378.1">
    <molecule id="Q9Y303-1"/>
    <property type="nucleotide sequence ID" value="NM_001330449.2"/>
</dbReference>
<dbReference type="RefSeq" id="NP_057028.2">
    <molecule id="Q9Y303-2"/>
    <property type="nucleotide sequence ID" value="NM_015944.3"/>
</dbReference>
<dbReference type="PDB" id="7NUT">
    <property type="method" value="X-ray"/>
    <property type="resolution" value="1.90 A"/>
    <property type="chains" value="A/B=1-409"/>
</dbReference>
<dbReference type="PDB" id="7NUU">
    <property type="method" value="X-ray"/>
    <property type="resolution" value="1.84 A"/>
    <property type="chains" value="A/B=1-409"/>
</dbReference>
<dbReference type="PDBsum" id="7NUT"/>
<dbReference type="PDBsum" id="7NUU"/>
<dbReference type="SMR" id="Q9Y303"/>
<dbReference type="BioGRID" id="119213">
    <property type="interactions" value="8"/>
</dbReference>
<dbReference type="FunCoup" id="Q9Y303">
    <property type="interactions" value="1337"/>
</dbReference>
<dbReference type="IntAct" id="Q9Y303">
    <property type="interactions" value="8"/>
</dbReference>
<dbReference type="STRING" id="9606.ENSP00000391596"/>
<dbReference type="ChEMBL" id="CHEMBL3217376"/>
<dbReference type="MEROPS" id="M38.979"/>
<dbReference type="iPTMnet" id="Q9Y303"/>
<dbReference type="PhosphoSitePlus" id="Q9Y303"/>
<dbReference type="BioMuta" id="AMDHD2"/>
<dbReference type="DMDM" id="166233266"/>
<dbReference type="jPOST" id="Q9Y303"/>
<dbReference type="MassIVE" id="Q9Y303"/>
<dbReference type="PaxDb" id="9606-ENSP00000391596"/>
<dbReference type="PeptideAtlas" id="Q9Y303"/>
<dbReference type="ProteomicsDB" id="85950">
    <molecule id="Q9Y303-1"/>
</dbReference>
<dbReference type="ProteomicsDB" id="85951">
    <molecule id="Q9Y303-2"/>
</dbReference>
<dbReference type="ProteomicsDB" id="85952">
    <molecule id="Q9Y303-3"/>
</dbReference>
<dbReference type="Pumba" id="Q9Y303"/>
<dbReference type="Antibodypedia" id="23813">
    <property type="antibodies" value="107 antibodies from 15 providers"/>
</dbReference>
<dbReference type="DNASU" id="51005"/>
<dbReference type="Ensembl" id="ENST00000293971.11">
    <molecule id="Q9Y303-1"/>
    <property type="protein sequence ID" value="ENSP00000293971.6"/>
    <property type="gene ID" value="ENSG00000162066.16"/>
</dbReference>
<dbReference type="Ensembl" id="ENST00000302956.8">
    <molecule id="Q9Y303-2"/>
    <property type="protein sequence ID" value="ENSP00000307481.4"/>
    <property type="gene ID" value="ENSG00000162066.16"/>
</dbReference>
<dbReference type="Ensembl" id="ENST00000413459.7">
    <molecule id="Q9Y303-3"/>
    <property type="protein sequence ID" value="ENSP00000391596.3"/>
    <property type="gene ID" value="ENSG00000162066.16"/>
</dbReference>
<dbReference type="GeneID" id="51005"/>
<dbReference type="KEGG" id="hsa:51005"/>
<dbReference type="MANE-Select" id="ENST00000293971.11">
    <property type="protein sequence ID" value="ENSP00000293971.6"/>
    <property type="RefSeq nucleotide sequence ID" value="NM_001330449.2"/>
    <property type="RefSeq protein sequence ID" value="NP_001317378.1"/>
</dbReference>
<dbReference type="UCSC" id="uc002cqp.4">
    <molecule id="Q9Y303-1"/>
    <property type="organism name" value="human"/>
</dbReference>
<dbReference type="AGR" id="HGNC:24262"/>
<dbReference type="CTD" id="51005"/>
<dbReference type="DisGeNET" id="51005"/>
<dbReference type="GeneCards" id="AMDHD2"/>
<dbReference type="HGNC" id="HGNC:24262">
    <property type="gene designation" value="AMDHD2"/>
</dbReference>
<dbReference type="HPA" id="ENSG00000162066">
    <property type="expression patterns" value="Low tissue specificity"/>
</dbReference>
<dbReference type="MIM" id="620864">
    <property type="type" value="gene"/>
</dbReference>
<dbReference type="neXtProt" id="NX_Q9Y303"/>
<dbReference type="OpenTargets" id="ENSG00000162066"/>
<dbReference type="PharmGKB" id="PA143485298"/>
<dbReference type="VEuPathDB" id="HostDB:ENSG00000162066"/>
<dbReference type="eggNOG" id="KOG3892">
    <property type="taxonomic scope" value="Eukaryota"/>
</dbReference>
<dbReference type="GeneTree" id="ENSGT00390000012605"/>
<dbReference type="InParanoid" id="Q9Y303"/>
<dbReference type="OMA" id="PCRKGAH"/>
<dbReference type="OrthoDB" id="10264777at2759"/>
<dbReference type="PAN-GO" id="Q9Y303">
    <property type="GO annotations" value="2 GO annotations based on evolutionary models"/>
</dbReference>
<dbReference type="PhylomeDB" id="Q9Y303"/>
<dbReference type="TreeFam" id="TF315036"/>
<dbReference type="PathwayCommons" id="Q9Y303"/>
<dbReference type="Reactome" id="R-HSA-446210">
    <property type="pathway name" value="Synthesis of UDP-N-acetyl-glucosamine"/>
</dbReference>
<dbReference type="SignaLink" id="Q9Y303"/>
<dbReference type="UniPathway" id="UPA00629"/>
<dbReference type="BioGRID-ORCS" id="51005">
    <property type="hits" value="18 hits in 1148 CRISPR screens"/>
</dbReference>
<dbReference type="ChiTaRS" id="AMDHD2">
    <property type="organism name" value="human"/>
</dbReference>
<dbReference type="GenomeRNAi" id="51005"/>
<dbReference type="Pharos" id="Q9Y303">
    <property type="development level" value="Tchem"/>
</dbReference>
<dbReference type="PRO" id="PR:Q9Y303"/>
<dbReference type="Proteomes" id="UP000005640">
    <property type="component" value="Chromosome 16"/>
</dbReference>
<dbReference type="RNAct" id="Q9Y303">
    <property type="molecule type" value="protein"/>
</dbReference>
<dbReference type="Bgee" id="ENSG00000162066">
    <property type="expression patterns" value="Expressed in left testis and 102 other cell types or tissues"/>
</dbReference>
<dbReference type="ExpressionAtlas" id="Q9Y303">
    <property type="expression patterns" value="baseline and differential"/>
</dbReference>
<dbReference type="GO" id="GO:0005829">
    <property type="term" value="C:cytosol"/>
    <property type="evidence" value="ECO:0000304"/>
    <property type="project" value="Reactome"/>
</dbReference>
<dbReference type="GO" id="GO:0005634">
    <property type="term" value="C:nucleus"/>
    <property type="evidence" value="ECO:0007005"/>
    <property type="project" value="UniProtKB"/>
</dbReference>
<dbReference type="GO" id="GO:0046872">
    <property type="term" value="F:metal ion binding"/>
    <property type="evidence" value="ECO:0007669"/>
    <property type="project" value="UniProtKB-KW"/>
</dbReference>
<dbReference type="GO" id="GO:0008448">
    <property type="term" value="F:N-acetylglucosamine-6-phosphate deacetylase activity"/>
    <property type="evidence" value="ECO:0000314"/>
    <property type="project" value="UniProtKB"/>
</dbReference>
<dbReference type="GO" id="GO:0006046">
    <property type="term" value="P:N-acetylglucosamine catabolic process"/>
    <property type="evidence" value="ECO:0000318"/>
    <property type="project" value="GO_Central"/>
</dbReference>
<dbReference type="GO" id="GO:0019262">
    <property type="term" value="P:N-acetylneuraminate catabolic process"/>
    <property type="evidence" value="ECO:0000304"/>
    <property type="project" value="UniProtKB"/>
</dbReference>
<dbReference type="GO" id="GO:0106279">
    <property type="term" value="P:negative regulation of UDP-N-acetylglucosamine biosynthetic process"/>
    <property type="evidence" value="ECO:0000314"/>
    <property type="project" value="FlyBase"/>
</dbReference>
<dbReference type="GO" id="GO:0006048">
    <property type="term" value="P:UDP-N-acetylglucosamine biosynthetic process"/>
    <property type="evidence" value="ECO:0000304"/>
    <property type="project" value="Reactome"/>
</dbReference>
<dbReference type="CDD" id="cd00854">
    <property type="entry name" value="NagA"/>
    <property type="match status" value="1"/>
</dbReference>
<dbReference type="FunFam" id="3.20.20.140:FF:000023">
    <property type="entry name" value="N-acetylglucosamine-6-phosphate deacetylase"/>
    <property type="match status" value="1"/>
</dbReference>
<dbReference type="Gene3D" id="3.20.20.140">
    <property type="entry name" value="Metal-dependent hydrolases"/>
    <property type="match status" value="1"/>
</dbReference>
<dbReference type="Gene3D" id="2.30.40.10">
    <property type="entry name" value="Urease, subunit C, domain 1"/>
    <property type="match status" value="1"/>
</dbReference>
<dbReference type="InterPro" id="IPR006680">
    <property type="entry name" value="Amidohydro-rel"/>
</dbReference>
<dbReference type="InterPro" id="IPR003764">
    <property type="entry name" value="GlcNAc_6-P_deAcase"/>
</dbReference>
<dbReference type="InterPro" id="IPR011059">
    <property type="entry name" value="Metal-dep_hydrolase_composite"/>
</dbReference>
<dbReference type="InterPro" id="IPR032466">
    <property type="entry name" value="Metal_Hydrolase"/>
</dbReference>
<dbReference type="NCBIfam" id="TIGR00221">
    <property type="entry name" value="nagA"/>
    <property type="match status" value="1"/>
</dbReference>
<dbReference type="PANTHER" id="PTHR11113">
    <property type="entry name" value="N-ACETYLGLUCOSAMINE-6-PHOSPHATE DEACETYLASE"/>
    <property type="match status" value="1"/>
</dbReference>
<dbReference type="PANTHER" id="PTHR11113:SF14">
    <property type="entry name" value="N-ACETYLGLUCOSAMINE-6-PHOSPHATE DEACETYLASE"/>
    <property type="match status" value="1"/>
</dbReference>
<dbReference type="Pfam" id="PF01979">
    <property type="entry name" value="Amidohydro_1"/>
    <property type="match status" value="1"/>
</dbReference>
<dbReference type="PIRSF" id="PIRSF038994">
    <property type="entry name" value="NagA"/>
    <property type="match status" value="1"/>
</dbReference>
<dbReference type="SUPFAM" id="SSF51338">
    <property type="entry name" value="Composite domain of metallo-dependent hydrolases"/>
    <property type="match status" value="1"/>
</dbReference>
<dbReference type="SUPFAM" id="SSF51556">
    <property type="entry name" value="Metallo-dependent hydrolases"/>
    <property type="match status" value="1"/>
</dbReference>